<gene>
    <name evidence="1" type="primary">ispF</name>
    <name type="ordered locus">BCQ_0100</name>
</gene>
<feature type="chain" id="PRO_1000118994" description="2-C-methyl-D-erythritol 2,4-cyclodiphosphate synthase">
    <location>
        <begin position="1"/>
        <end position="158"/>
    </location>
</feature>
<feature type="binding site" evidence="1">
    <location>
        <begin position="9"/>
        <end position="11"/>
    </location>
    <ligand>
        <name>4-CDP-2-C-methyl-D-erythritol 2-phosphate</name>
        <dbReference type="ChEBI" id="CHEBI:57919"/>
    </ligand>
</feature>
<feature type="binding site" evidence="1">
    <location>
        <position position="9"/>
    </location>
    <ligand>
        <name>a divalent metal cation</name>
        <dbReference type="ChEBI" id="CHEBI:60240"/>
    </ligand>
</feature>
<feature type="binding site" evidence="1">
    <location>
        <position position="11"/>
    </location>
    <ligand>
        <name>a divalent metal cation</name>
        <dbReference type="ChEBI" id="CHEBI:60240"/>
    </ligand>
</feature>
<feature type="binding site" evidence="1">
    <location>
        <begin position="35"/>
        <end position="36"/>
    </location>
    <ligand>
        <name>4-CDP-2-C-methyl-D-erythritol 2-phosphate</name>
        <dbReference type="ChEBI" id="CHEBI:57919"/>
    </ligand>
</feature>
<feature type="binding site" evidence="1">
    <location>
        <position position="43"/>
    </location>
    <ligand>
        <name>a divalent metal cation</name>
        <dbReference type="ChEBI" id="CHEBI:60240"/>
    </ligand>
</feature>
<feature type="binding site" evidence="1">
    <location>
        <begin position="57"/>
        <end position="59"/>
    </location>
    <ligand>
        <name>4-CDP-2-C-methyl-D-erythritol 2-phosphate</name>
        <dbReference type="ChEBI" id="CHEBI:57919"/>
    </ligand>
</feature>
<feature type="binding site" evidence="1">
    <location>
        <begin position="62"/>
        <end position="66"/>
    </location>
    <ligand>
        <name>4-CDP-2-C-methyl-D-erythritol 2-phosphate</name>
        <dbReference type="ChEBI" id="CHEBI:57919"/>
    </ligand>
</feature>
<feature type="binding site" evidence="1">
    <location>
        <begin position="101"/>
        <end position="107"/>
    </location>
    <ligand>
        <name>4-CDP-2-C-methyl-D-erythritol 2-phosphate</name>
        <dbReference type="ChEBI" id="CHEBI:57919"/>
    </ligand>
</feature>
<feature type="binding site" evidence="1">
    <location>
        <begin position="133"/>
        <end position="136"/>
    </location>
    <ligand>
        <name>4-CDP-2-C-methyl-D-erythritol 2-phosphate</name>
        <dbReference type="ChEBI" id="CHEBI:57919"/>
    </ligand>
</feature>
<feature type="binding site" evidence="1">
    <location>
        <position position="140"/>
    </location>
    <ligand>
        <name>4-CDP-2-C-methyl-D-erythritol 2-phosphate</name>
        <dbReference type="ChEBI" id="CHEBI:57919"/>
    </ligand>
</feature>
<feature type="binding site" evidence="1">
    <location>
        <position position="143"/>
    </location>
    <ligand>
        <name>4-CDP-2-C-methyl-D-erythritol 2-phosphate</name>
        <dbReference type="ChEBI" id="CHEBI:57919"/>
    </ligand>
</feature>
<feature type="site" description="Transition state stabilizer" evidence="1">
    <location>
        <position position="35"/>
    </location>
</feature>
<feature type="site" description="Transition state stabilizer" evidence="1">
    <location>
        <position position="134"/>
    </location>
</feature>
<protein>
    <recommendedName>
        <fullName evidence="1">2-C-methyl-D-erythritol 2,4-cyclodiphosphate synthase</fullName>
        <shortName evidence="1">MECDP-synthase</shortName>
        <shortName evidence="1">MECPP-synthase</shortName>
        <shortName evidence="1">MECPS</shortName>
        <ecNumber evidence="1">4.6.1.12</ecNumber>
    </recommendedName>
</protein>
<evidence type="ECO:0000255" key="1">
    <source>
        <dbReference type="HAMAP-Rule" id="MF_00107"/>
    </source>
</evidence>
<sequence length="158" mass="17219">MFRIGQGFDVHEFAEGRPLIIGGITIPHEKGLIGHSDADVLLHTIADACLGAIAAGDIGKHFPDTDPAFKDADSAVLLQKVWEFVREQGYELGNLDCTIIAQKPKMAPHIESMRKRISELLETSIDNINVKATTTEKLGFTGREEGIASQAVVLLQKK</sequence>
<reference key="1">
    <citation type="journal article" date="2009" name="J. Bacteriol.">
        <title>Complete genome sequence of the extremophilic Bacillus cereus strain Q1 with industrial applications.</title>
        <authorList>
            <person name="Xiong Z."/>
            <person name="Jiang Y."/>
            <person name="Qi D."/>
            <person name="Lu H."/>
            <person name="Yang F."/>
            <person name="Yang J."/>
            <person name="Chen L."/>
            <person name="Sun L."/>
            <person name="Xu X."/>
            <person name="Xue Y."/>
            <person name="Zhu Y."/>
            <person name="Jin Q."/>
        </authorList>
    </citation>
    <scope>NUCLEOTIDE SEQUENCE [LARGE SCALE GENOMIC DNA]</scope>
    <source>
        <strain>Q1</strain>
    </source>
</reference>
<dbReference type="EC" id="4.6.1.12" evidence="1"/>
<dbReference type="EMBL" id="CP000227">
    <property type="protein sequence ID" value="ACM10615.1"/>
    <property type="molecule type" value="Genomic_DNA"/>
</dbReference>
<dbReference type="SMR" id="B9IZH1"/>
<dbReference type="KEGG" id="bcq:BCQ_0100"/>
<dbReference type="HOGENOM" id="CLU_084630_2_0_9"/>
<dbReference type="UniPathway" id="UPA00056">
    <property type="reaction ID" value="UER00095"/>
</dbReference>
<dbReference type="Proteomes" id="UP000000441">
    <property type="component" value="Chromosome"/>
</dbReference>
<dbReference type="GO" id="GO:0008685">
    <property type="term" value="F:2-C-methyl-D-erythritol 2,4-cyclodiphosphate synthase activity"/>
    <property type="evidence" value="ECO:0007669"/>
    <property type="project" value="UniProtKB-UniRule"/>
</dbReference>
<dbReference type="GO" id="GO:0046872">
    <property type="term" value="F:metal ion binding"/>
    <property type="evidence" value="ECO:0007669"/>
    <property type="project" value="UniProtKB-KW"/>
</dbReference>
<dbReference type="GO" id="GO:0019288">
    <property type="term" value="P:isopentenyl diphosphate biosynthetic process, methylerythritol 4-phosphate pathway"/>
    <property type="evidence" value="ECO:0007669"/>
    <property type="project" value="UniProtKB-UniRule"/>
</dbReference>
<dbReference type="GO" id="GO:0016114">
    <property type="term" value="P:terpenoid biosynthetic process"/>
    <property type="evidence" value="ECO:0007669"/>
    <property type="project" value="InterPro"/>
</dbReference>
<dbReference type="CDD" id="cd00554">
    <property type="entry name" value="MECDP_synthase"/>
    <property type="match status" value="1"/>
</dbReference>
<dbReference type="FunFam" id="3.30.1330.50:FF:000001">
    <property type="entry name" value="2-C-methyl-D-erythritol 2,4-cyclodiphosphate synthase"/>
    <property type="match status" value="1"/>
</dbReference>
<dbReference type="Gene3D" id="3.30.1330.50">
    <property type="entry name" value="2-C-methyl-D-erythritol 2,4-cyclodiphosphate synthase"/>
    <property type="match status" value="1"/>
</dbReference>
<dbReference type="HAMAP" id="MF_00107">
    <property type="entry name" value="IspF"/>
    <property type="match status" value="1"/>
</dbReference>
<dbReference type="InterPro" id="IPR003526">
    <property type="entry name" value="MECDP_synthase"/>
</dbReference>
<dbReference type="InterPro" id="IPR020555">
    <property type="entry name" value="MECDP_synthase_CS"/>
</dbReference>
<dbReference type="InterPro" id="IPR036571">
    <property type="entry name" value="MECDP_synthase_sf"/>
</dbReference>
<dbReference type="NCBIfam" id="TIGR00151">
    <property type="entry name" value="ispF"/>
    <property type="match status" value="1"/>
</dbReference>
<dbReference type="PANTHER" id="PTHR43181">
    <property type="entry name" value="2-C-METHYL-D-ERYTHRITOL 2,4-CYCLODIPHOSPHATE SYNTHASE, CHLOROPLASTIC"/>
    <property type="match status" value="1"/>
</dbReference>
<dbReference type="PANTHER" id="PTHR43181:SF1">
    <property type="entry name" value="2-C-METHYL-D-ERYTHRITOL 2,4-CYCLODIPHOSPHATE SYNTHASE, CHLOROPLASTIC"/>
    <property type="match status" value="1"/>
</dbReference>
<dbReference type="Pfam" id="PF02542">
    <property type="entry name" value="YgbB"/>
    <property type="match status" value="1"/>
</dbReference>
<dbReference type="SUPFAM" id="SSF69765">
    <property type="entry name" value="IpsF-like"/>
    <property type="match status" value="1"/>
</dbReference>
<dbReference type="PROSITE" id="PS01350">
    <property type="entry name" value="ISPF"/>
    <property type="match status" value="1"/>
</dbReference>
<keyword id="KW-0414">Isoprene biosynthesis</keyword>
<keyword id="KW-0456">Lyase</keyword>
<keyword id="KW-0479">Metal-binding</keyword>
<accession>B9IZH1</accession>
<comment type="function">
    <text evidence="1">Involved in the biosynthesis of isopentenyl diphosphate (IPP) and dimethylallyl diphosphate (DMAPP), two major building blocks of isoprenoid compounds. Catalyzes the conversion of 4-diphosphocytidyl-2-C-methyl-D-erythritol 2-phosphate (CDP-ME2P) to 2-C-methyl-D-erythritol 2,4-cyclodiphosphate (ME-CPP) with a corresponding release of cytidine 5-monophosphate (CMP).</text>
</comment>
<comment type="catalytic activity">
    <reaction evidence="1">
        <text>4-CDP-2-C-methyl-D-erythritol 2-phosphate = 2-C-methyl-D-erythritol 2,4-cyclic diphosphate + CMP</text>
        <dbReference type="Rhea" id="RHEA:23864"/>
        <dbReference type="ChEBI" id="CHEBI:57919"/>
        <dbReference type="ChEBI" id="CHEBI:58483"/>
        <dbReference type="ChEBI" id="CHEBI:60377"/>
        <dbReference type="EC" id="4.6.1.12"/>
    </reaction>
</comment>
<comment type="cofactor">
    <cofactor evidence="1">
        <name>a divalent metal cation</name>
        <dbReference type="ChEBI" id="CHEBI:60240"/>
    </cofactor>
    <text evidence="1">Binds 1 divalent metal cation per subunit.</text>
</comment>
<comment type="pathway">
    <text evidence="1">Isoprenoid biosynthesis; isopentenyl diphosphate biosynthesis via DXP pathway; isopentenyl diphosphate from 1-deoxy-D-xylulose 5-phosphate: step 4/6.</text>
</comment>
<comment type="subunit">
    <text evidence="1">Homotrimer.</text>
</comment>
<comment type="similarity">
    <text evidence="1">Belongs to the IspF family.</text>
</comment>
<proteinExistence type="inferred from homology"/>
<organism>
    <name type="scientific">Bacillus cereus (strain Q1)</name>
    <dbReference type="NCBI Taxonomy" id="361100"/>
    <lineage>
        <taxon>Bacteria</taxon>
        <taxon>Bacillati</taxon>
        <taxon>Bacillota</taxon>
        <taxon>Bacilli</taxon>
        <taxon>Bacillales</taxon>
        <taxon>Bacillaceae</taxon>
        <taxon>Bacillus</taxon>
        <taxon>Bacillus cereus group</taxon>
    </lineage>
</organism>
<name>ISPF_BACCQ</name>